<protein>
    <recommendedName>
        <fullName evidence="1">UDP-3-O-acylglucosamine N-acyltransferase</fullName>
        <ecNumber evidence="1">2.3.1.191</ecNumber>
    </recommendedName>
</protein>
<organism>
    <name type="scientific">Aquifex aeolicus (strain VF5)</name>
    <dbReference type="NCBI Taxonomy" id="224324"/>
    <lineage>
        <taxon>Bacteria</taxon>
        <taxon>Pseudomonadati</taxon>
        <taxon>Aquificota</taxon>
        <taxon>Aquificia</taxon>
        <taxon>Aquificales</taxon>
        <taxon>Aquificaceae</taxon>
        <taxon>Aquifex</taxon>
    </lineage>
</organism>
<reference key="1">
    <citation type="journal article" date="1998" name="Nature">
        <title>The complete genome of the hyperthermophilic bacterium Aquifex aeolicus.</title>
        <authorList>
            <person name="Deckert G."/>
            <person name="Warren P.V."/>
            <person name="Gaasterland T."/>
            <person name="Young W.G."/>
            <person name="Lenox A.L."/>
            <person name="Graham D.E."/>
            <person name="Overbeek R."/>
            <person name="Snead M.A."/>
            <person name="Keller M."/>
            <person name="Aujay M."/>
            <person name="Huber R."/>
            <person name="Feldman R.A."/>
            <person name="Short J.M."/>
            <person name="Olsen G.J."/>
            <person name="Swanson R.V."/>
        </authorList>
    </citation>
    <scope>NUCLEOTIDE SEQUENCE [LARGE SCALE GENOMIC DNA]</scope>
    <source>
        <strain>VF5</strain>
    </source>
</reference>
<accession>O66817</accession>
<keyword id="KW-0012">Acyltransferase</keyword>
<keyword id="KW-0441">Lipid A biosynthesis</keyword>
<keyword id="KW-0444">Lipid biosynthesis</keyword>
<keyword id="KW-0443">Lipid metabolism</keyword>
<keyword id="KW-1185">Reference proteome</keyword>
<keyword id="KW-0677">Repeat</keyword>
<keyword id="KW-0808">Transferase</keyword>
<dbReference type="EC" id="2.3.1.191" evidence="1"/>
<dbReference type="EMBL" id="AE000657">
    <property type="protein sequence ID" value="AAC06767.1"/>
    <property type="status" value="ALT_FRAME"/>
    <property type="molecule type" value="Genomic_DNA"/>
</dbReference>
<dbReference type="PIR" id="E70348">
    <property type="entry name" value="E70348"/>
</dbReference>
<dbReference type="SMR" id="O66817"/>
<dbReference type="STRING" id="224324.aq_538"/>
<dbReference type="EnsemblBacteria" id="AAC06767">
    <property type="protein sequence ID" value="AAC06767"/>
    <property type="gene ID" value="aq_538"/>
</dbReference>
<dbReference type="eggNOG" id="COG1044">
    <property type="taxonomic scope" value="Bacteria"/>
</dbReference>
<dbReference type="HOGENOM" id="CLU_049865_0_0_0"/>
<dbReference type="InParanoid" id="O66817"/>
<dbReference type="UniPathway" id="UPA00973"/>
<dbReference type="Proteomes" id="UP000000798">
    <property type="component" value="Chromosome"/>
</dbReference>
<dbReference type="GO" id="GO:0016020">
    <property type="term" value="C:membrane"/>
    <property type="evidence" value="ECO:0007669"/>
    <property type="project" value="GOC"/>
</dbReference>
<dbReference type="GO" id="GO:0016410">
    <property type="term" value="F:N-acyltransferase activity"/>
    <property type="evidence" value="ECO:0007669"/>
    <property type="project" value="InterPro"/>
</dbReference>
<dbReference type="GO" id="GO:0009245">
    <property type="term" value="P:lipid A biosynthetic process"/>
    <property type="evidence" value="ECO:0007669"/>
    <property type="project" value="UniProtKB-UniRule"/>
</dbReference>
<dbReference type="CDD" id="cd03352">
    <property type="entry name" value="LbH_LpxD"/>
    <property type="match status" value="1"/>
</dbReference>
<dbReference type="Gene3D" id="2.160.10.10">
    <property type="entry name" value="Hexapeptide repeat proteins"/>
    <property type="match status" value="1"/>
</dbReference>
<dbReference type="Gene3D" id="3.40.1390.10">
    <property type="entry name" value="MurE/MurF, N-terminal domain"/>
    <property type="match status" value="1"/>
</dbReference>
<dbReference type="HAMAP" id="MF_00523">
    <property type="entry name" value="LpxD"/>
    <property type="match status" value="1"/>
</dbReference>
<dbReference type="InterPro" id="IPR001451">
    <property type="entry name" value="Hexapep"/>
</dbReference>
<dbReference type="InterPro" id="IPR007691">
    <property type="entry name" value="LpxD"/>
</dbReference>
<dbReference type="InterPro" id="IPR011004">
    <property type="entry name" value="Trimer_LpxA-like_sf"/>
</dbReference>
<dbReference type="NCBIfam" id="TIGR01853">
    <property type="entry name" value="lipid_A_lpxD"/>
    <property type="match status" value="1"/>
</dbReference>
<dbReference type="NCBIfam" id="NF002060">
    <property type="entry name" value="PRK00892.1"/>
    <property type="match status" value="1"/>
</dbReference>
<dbReference type="PANTHER" id="PTHR43378">
    <property type="entry name" value="UDP-3-O-ACYLGLUCOSAMINE N-ACYLTRANSFERASE"/>
    <property type="match status" value="1"/>
</dbReference>
<dbReference type="PANTHER" id="PTHR43378:SF2">
    <property type="entry name" value="UDP-3-O-ACYLGLUCOSAMINE N-ACYLTRANSFERASE 1, MITOCHONDRIAL-RELATED"/>
    <property type="match status" value="1"/>
</dbReference>
<dbReference type="Pfam" id="PF00132">
    <property type="entry name" value="Hexapep"/>
    <property type="match status" value="3"/>
</dbReference>
<dbReference type="SUPFAM" id="SSF51161">
    <property type="entry name" value="Trimeric LpxA-like enzymes"/>
    <property type="match status" value="1"/>
</dbReference>
<feature type="chain" id="PRO_0000059643" description="UDP-3-O-acylglucosamine N-acyltransferase">
    <location>
        <begin position="1"/>
        <end position="326"/>
    </location>
</feature>
<feature type="active site" description="Proton acceptor" evidence="1">
    <location>
        <position position="233"/>
    </location>
</feature>
<proteinExistence type="inferred from homology"/>
<comment type="function">
    <text evidence="1">Catalyzes the N-acylation of UDP-3-O-acylglucosamine using 3-hydroxyacyl-ACP as the acyl donor. Is involved in the biosynthesis of lipid A, a phosphorylated glycolipid that anchors the lipopolysaccharide to the outer membrane of the cell.</text>
</comment>
<comment type="catalytic activity">
    <reaction evidence="1">
        <text>a UDP-3-O-[(3R)-3-hydroxyacyl]-alpha-D-glucosamine + a (3R)-hydroxyacyl-[ACP] = a UDP-2-N,3-O-bis[(3R)-3-hydroxyacyl]-alpha-D-glucosamine + holo-[ACP] + H(+)</text>
        <dbReference type="Rhea" id="RHEA:53836"/>
        <dbReference type="Rhea" id="RHEA-COMP:9685"/>
        <dbReference type="Rhea" id="RHEA-COMP:9945"/>
        <dbReference type="ChEBI" id="CHEBI:15378"/>
        <dbReference type="ChEBI" id="CHEBI:64479"/>
        <dbReference type="ChEBI" id="CHEBI:78827"/>
        <dbReference type="ChEBI" id="CHEBI:137740"/>
        <dbReference type="ChEBI" id="CHEBI:137748"/>
        <dbReference type="EC" id="2.3.1.191"/>
    </reaction>
</comment>
<comment type="pathway">
    <text evidence="1">Bacterial outer membrane biogenesis; LPS lipid A biosynthesis.</text>
</comment>
<comment type="subunit">
    <text evidence="1">Homotrimer.</text>
</comment>
<comment type="similarity">
    <text evidence="1">Belongs to the transferase hexapeptide repeat family. LpxD subfamily.</text>
</comment>
<comment type="sequence caution" evidence="2">
    <conflict type="frameshift">
        <sequence resource="EMBL-CDS" id="AAC06767"/>
    </conflict>
</comment>
<evidence type="ECO:0000255" key="1">
    <source>
        <dbReference type="HAMAP-Rule" id="MF_00523"/>
    </source>
</evidence>
<evidence type="ECO:0000305" key="2"/>
<name>LPXD_AQUAE</name>
<sequence>METTLGEIARIIKGELKGNHNIKIKGISTPENPKENTVVFCRNMEEVEKAKEKASAVVTQEEVKDFPHIKVKDVKLALAEFLEHFFPEEHPWGFLRTPASEKELEIGMGSFIGDFVVIGKNVKIGRNVKIYPFTYVGDNTVIGDNTVIFSGVHIYRNTVIGRNVRIHSGAVIGADGFGYHITQEGIKKIPHIGGVIIEDNVEIGANTTIDRALIENTLIGKNTKIDNLVMVAHNCKVGENNILVSQVGLSGSVKTGKNVILAGQVGVADHVEIGDNVIVTAKSGVANNLAPNKTYGANLPAIEWSRWKRIYVYLLRLPELFKKITT</sequence>
<gene>
    <name evidence="1" type="primary">lpxD</name>
    <name type="ordered locus">aq_538</name>
</gene>